<protein>
    <recommendedName>
        <fullName evidence="1">Ion-translocating oxidoreductase complex subunit B</fullName>
        <ecNumber evidence="1">7.-.-.-</ecNumber>
    </recommendedName>
    <alternativeName>
        <fullName evidence="1">Rsx electron transport complex subunit B</fullName>
    </alternativeName>
</protein>
<comment type="function">
    <text evidence="1">Part of a membrane-bound complex that couples electron transfer with translocation of ions across the membrane. Required to maintain the reduced state of SoxR.</text>
</comment>
<comment type="cofactor">
    <cofactor evidence="1">
        <name>[4Fe-4S] cluster</name>
        <dbReference type="ChEBI" id="CHEBI:49883"/>
    </cofactor>
    <text evidence="1">Binds 3 [4Fe-4S] clusters.</text>
</comment>
<comment type="subunit">
    <text evidence="1">The complex is composed of six subunits: RsxA, RsxB, RsxC, RsxD, RsxE and RsxG.</text>
</comment>
<comment type="subcellular location">
    <subcellularLocation>
        <location evidence="1">Cell inner membrane</location>
    </subcellularLocation>
</comment>
<comment type="similarity">
    <text evidence="1">Belongs to the 4Fe4S bacterial-type ferredoxin family. RnfB subfamily.</text>
</comment>
<dbReference type="EC" id="7.-.-.-" evidence="1"/>
<dbReference type="EMBL" id="CP001127">
    <property type="protein sequence ID" value="ACF93084.1"/>
    <property type="molecule type" value="Genomic_DNA"/>
</dbReference>
<dbReference type="RefSeq" id="WP_001092600.1">
    <property type="nucleotide sequence ID" value="NC_011094.1"/>
</dbReference>
<dbReference type="SMR" id="B4TV18"/>
<dbReference type="KEGG" id="sew:SeSA_A1556"/>
<dbReference type="HOGENOM" id="CLU_063448_2_0_6"/>
<dbReference type="Proteomes" id="UP000001865">
    <property type="component" value="Chromosome"/>
</dbReference>
<dbReference type="GO" id="GO:0005886">
    <property type="term" value="C:plasma membrane"/>
    <property type="evidence" value="ECO:0007669"/>
    <property type="project" value="UniProtKB-SubCell"/>
</dbReference>
<dbReference type="GO" id="GO:0051539">
    <property type="term" value="F:4 iron, 4 sulfur cluster binding"/>
    <property type="evidence" value="ECO:0007669"/>
    <property type="project" value="UniProtKB-UniRule"/>
</dbReference>
<dbReference type="GO" id="GO:0009055">
    <property type="term" value="F:electron transfer activity"/>
    <property type="evidence" value="ECO:0007669"/>
    <property type="project" value="InterPro"/>
</dbReference>
<dbReference type="GO" id="GO:0046872">
    <property type="term" value="F:metal ion binding"/>
    <property type="evidence" value="ECO:0007669"/>
    <property type="project" value="UniProtKB-KW"/>
</dbReference>
<dbReference type="GO" id="GO:0022900">
    <property type="term" value="P:electron transport chain"/>
    <property type="evidence" value="ECO:0007669"/>
    <property type="project" value="UniProtKB-UniRule"/>
</dbReference>
<dbReference type="FunFam" id="1.10.15.40:FF:000001">
    <property type="entry name" value="Ion-translocating oxidoreductase complex subunit B"/>
    <property type="match status" value="1"/>
</dbReference>
<dbReference type="Gene3D" id="3.30.70.20">
    <property type="match status" value="1"/>
</dbReference>
<dbReference type="Gene3D" id="1.10.15.40">
    <property type="entry name" value="Electron transport complex subunit B, putative Fe-S cluster"/>
    <property type="match status" value="1"/>
</dbReference>
<dbReference type="HAMAP" id="MF_00463">
    <property type="entry name" value="RsxB_RnfB"/>
    <property type="match status" value="1"/>
</dbReference>
<dbReference type="InterPro" id="IPR007202">
    <property type="entry name" value="4Fe-4S_dom"/>
</dbReference>
<dbReference type="InterPro" id="IPR017896">
    <property type="entry name" value="4Fe4S_Fe-S-bd"/>
</dbReference>
<dbReference type="InterPro" id="IPR017900">
    <property type="entry name" value="4Fe4S_Fe_S_CS"/>
</dbReference>
<dbReference type="InterPro" id="IPR050395">
    <property type="entry name" value="4Fe4S_Ferredoxin_RnfB"/>
</dbReference>
<dbReference type="InterPro" id="IPR010207">
    <property type="entry name" value="Elect_transpt_cplx_RnfB/RsxB"/>
</dbReference>
<dbReference type="InterPro" id="IPR016463">
    <property type="entry name" value="RnfB/RsxB_Proteobac"/>
</dbReference>
<dbReference type="NCBIfam" id="NF003475">
    <property type="entry name" value="PRK05113.1"/>
    <property type="match status" value="1"/>
</dbReference>
<dbReference type="NCBIfam" id="TIGR01944">
    <property type="entry name" value="rnfB"/>
    <property type="match status" value="1"/>
</dbReference>
<dbReference type="PANTHER" id="PTHR43560">
    <property type="entry name" value="ION-TRANSLOCATING OXIDOREDUCTASE COMPLEX SUBUNIT B"/>
    <property type="match status" value="1"/>
</dbReference>
<dbReference type="PANTHER" id="PTHR43560:SF1">
    <property type="entry name" value="ION-TRANSLOCATING OXIDOREDUCTASE COMPLEX SUBUNIT B"/>
    <property type="match status" value="1"/>
</dbReference>
<dbReference type="Pfam" id="PF14697">
    <property type="entry name" value="Fer4_21"/>
    <property type="match status" value="1"/>
</dbReference>
<dbReference type="Pfam" id="PF04060">
    <property type="entry name" value="FeS"/>
    <property type="match status" value="1"/>
</dbReference>
<dbReference type="PIRSF" id="PIRSF005784">
    <property type="entry name" value="Elect_transpt_RnfB"/>
    <property type="match status" value="1"/>
</dbReference>
<dbReference type="SUPFAM" id="SSF54862">
    <property type="entry name" value="4Fe-4S ferredoxins"/>
    <property type="match status" value="1"/>
</dbReference>
<dbReference type="PROSITE" id="PS51656">
    <property type="entry name" value="4FE4S"/>
    <property type="match status" value="1"/>
</dbReference>
<dbReference type="PROSITE" id="PS00198">
    <property type="entry name" value="4FE4S_FER_1"/>
    <property type="match status" value="2"/>
</dbReference>
<dbReference type="PROSITE" id="PS51379">
    <property type="entry name" value="4FE4S_FER_2"/>
    <property type="match status" value="2"/>
</dbReference>
<feature type="chain" id="PRO_1000194499" description="Ion-translocating oxidoreductase complex subunit B">
    <location>
        <begin position="1"/>
        <end position="192"/>
    </location>
</feature>
<feature type="domain" description="4Fe-4S" evidence="1">
    <location>
        <begin position="32"/>
        <end position="91"/>
    </location>
</feature>
<feature type="domain" description="4Fe-4S ferredoxin-type 1" evidence="1">
    <location>
        <begin position="108"/>
        <end position="137"/>
    </location>
</feature>
<feature type="domain" description="4Fe-4S ferredoxin-type 2" evidence="1">
    <location>
        <begin position="138"/>
        <end position="167"/>
    </location>
</feature>
<feature type="region of interest" description="Hydrophobic" evidence="1">
    <location>
        <begin position="1"/>
        <end position="26"/>
    </location>
</feature>
<feature type="binding site" evidence="1">
    <location>
        <position position="49"/>
    </location>
    <ligand>
        <name>[4Fe-4S] cluster</name>
        <dbReference type="ChEBI" id="CHEBI:49883"/>
        <label>1</label>
    </ligand>
</feature>
<feature type="binding site" evidence="1">
    <location>
        <position position="52"/>
    </location>
    <ligand>
        <name>[4Fe-4S] cluster</name>
        <dbReference type="ChEBI" id="CHEBI:49883"/>
        <label>1</label>
    </ligand>
</feature>
<feature type="binding site" evidence="1">
    <location>
        <position position="57"/>
    </location>
    <ligand>
        <name>[4Fe-4S] cluster</name>
        <dbReference type="ChEBI" id="CHEBI:49883"/>
        <label>1</label>
    </ligand>
</feature>
<feature type="binding site" evidence="1">
    <location>
        <position position="74"/>
    </location>
    <ligand>
        <name>[4Fe-4S] cluster</name>
        <dbReference type="ChEBI" id="CHEBI:49883"/>
        <label>1</label>
    </ligand>
</feature>
<feature type="binding site" evidence="1">
    <location>
        <position position="117"/>
    </location>
    <ligand>
        <name>[4Fe-4S] cluster</name>
        <dbReference type="ChEBI" id="CHEBI:49883"/>
        <label>2</label>
    </ligand>
</feature>
<feature type="binding site" evidence="1">
    <location>
        <position position="120"/>
    </location>
    <ligand>
        <name>[4Fe-4S] cluster</name>
        <dbReference type="ChEBI" id="CHEBI:49883"/>
        <label>2</label>
    </ligand>
</feature>
<feature type="binding site" evidence="1">
    <location>
        <position position="123"/>
    </location>
    <ligand>
        <name>[4Fe-4S] cluster</name>
        <dbReference type="ChEBI" id="CHEBI:49883"/>
        <label>2</label>
    </ligand>
</feature>
<feature type="binding site" evidence="1">
    <location>
        <position position="127"/>
    </location>
    <ligand>
        <name>[4Fe-4S] cluster</name>
        <dbReference type="ChEBI" id="CHEBI:49883"/>
        <label>3</label>
    </ligand>
</feature>
<feature type="binding site" evidence="1">
    <location>
        <position position="147"/>
    </location>
    <ligand>
        <name>[4Fe-4S] cluster</name>
        <dbReference type="ChEBI" id="CHEBI:49883"/>
        <label>3</label>
    </ligand>
</feature>
<feature type="binding site" evidence="1">
    <location>
        <position position="150"/>
    </location>
    <ligand>
        <name>[4Fe-4S] cluster</name>
        <dbReference type="ChEBI" id="CHEBI:49883"/>
        <label>3</label>
    </ligand>
</feature>
<feature type="binding site" evidence="1">
    <location>
        <position position="153"/>
    </location>
    <ligand>
        <name>[4Fe-4S] cluster</name>
        <dbReference type="ChEBI" id="CHEBI:49883"/>
        <label>3</label>
    </ligand>
</feature>
<feature type="binding site" evidence="1">
    <location>
        <position position="157"/>
    </location>
    <ligand>
        <name>[4Fe-4S] cluster</name>
        <dbReference type="ChEBI" id="CHEBI:49883"/>
        <label>2</label>
    </ligand>
</feature>
<evidence type="ECO:0000255" key="1">
    <source>
        <dbReference type="HAMAP-Rule" id="MF_00463"/>
    </source>
</evidence>
<proteinExistence type="inferred from homology"/>
<gene>
    <name evidence="1" type="primary">rsxB</name>
    <name type="synonym">rnfB</name>
    <name type="ordered locus">SeSA_A1556</name>
</gene>
<sequence>MNTIWIAVGALTLLGLVFGAILGYASRRFAVEDDPVVEKIDAILPQSQCGQCGYPGCRPYAEAVGLQGEKINRCAPGGEAVMLKMAELLNVEPQPCDGEEQQAAPVRMLAVIDENNCIGCTKCIQACPVDAIVGATRAMHTVMSDLCTGCNLCVDPCPTHCIELRPVNETPDSWKWDLNTIPVRIIPVEQHA</sequence>
<organism>
    <name type="scientific">Salmonella schwarzengrund (strain CVM19633)</name>
    <dbReference type="NCBI Taxonomy" id="439843"/>
    <lineage>
        <taxon>Bacteria</taxon>
        <taxon>Pseudomonadati</taxon>
        <taxon>Pseudomonadota</taxon>
        <taxon>Gammaproteobacteria</taxon>
        <taxon>Enterobacterales</taxon>
        <taxon>Enterobacteriaceae</taxon>
        <taxon>Salmonella</taxon>
    </lineage>
</organism>
<reference key="1">
    <citation type="journal article" date="2011" name="J. Bacteriol.">
        <title>Comparative genomics of 28 Salmonella enterica isolates: evidence for CRISPR-mediated adaptive sublineage evolution.</title>
        <authorList>
            <person name="Fricke W.F."/>
            <person name="Mammel M.K."/>
            <person name="McDermott P.F."/>
            <person name="Tartera C."/>
            <person name="White D.G."/>
            <person name="Leclerc J.E."/>
            <person name="Ravel J."/>
            <person name="Cebula T.A."/>
        </authorList>
    </citation>
    <scope>NUCLEOTIDE SEQUENCE [LARGE SCALE GENOMIC DNA]</scope>
    <source>
        <strain>CVM19633</strain>
    </source>
</reference>
<accession>B4TV18</accession>
<keyword id="KW-0004">4Fe-4S</keyword>
<keyword id="KW-0997">Cell inner membrane</keyword>
<keyword id="KW-1003">Cell membrane</keyword>
<keyword id="KW-0249">Electron transport</keyword>
<keyword id="KW-0408">Iron</keyword>
<keyword id="KW-0411">Iron-sulfur</keyword>
<keyword id="KW-0472">Membrane</keyword>
<keyword id="KW-0479">Metal-binding</keyword>
<keyword id="KW-0677">Repeat</keyword>
<keyword id="KW-1278">Translocase</keyword>
<keyword id="KW-0813">Transport</keyword>
<name>RSXB_SALSV</name>